<keyword id="KW-0119">Carbohydrate metabolism</keyword>
<keyword id="KW-0136">Cellulose degradation</keyword>
<keyword id="KW-0186">Copper</keyword>
<keyword id="KW-1015">Disulfide bond</keyword>
<keyword id="KW-0325">Glycoprotein</keyword>
<keyword id="KW-0479">Metal-binding</keyword>
<keyword id="KW-0503">Monooxygenase</keyword>
<keyword id="KW-0560">Oxidoreductase</keyword>
<keyword id="KW-0597">Phosphoprotein</keyword>
<keyword id="KW-0624">Polysaccharide degradation</keyword>
<keyword id="KW-1185">Reference proteome</keyword>
<keyword id="KW-0964">Secreted</keyword>
<keyword id="KW-0732">Signal</keyword>
<gene>
    <name evidence="9" type="primary">AA9-X282</name>
    <name type="ORF">CC1G_03525</name>
</gene>
<comment type="function">
    <text evidence="8">Lytic polysaccharide monooxygenase (LPMO) that depolymerizes crystalline and amorphous polysaccharides via the oxidation of scissile alpha- or beta-(1-4)-glycosidic bonds, yielding C1 oxidation products (PubMed:37463979). Catalysis by LPMOs requires the reduction of the active-site copper from Cu(II) to Cu(I) by a reducing agent and H(2)O(2) or O(2) as a cosubstrate (PubMed:37463979). Shows only weak binding properties to cellulose, and low cellulolytic oxidative activity which questions the involvement of X282 extension-containing AA9 proteins in the degradation of plant cell wall and opens new avenues as to the divergence of function of some AA9 members (PubMed:37463979).</text>
</comment>
<comment type="catalytic activity">
    <reaction evidence="8">
        <text>[(1-&gt;4)-beta-D-glucosyl]n+m + reduced acceptor + O2 = 4-dehydro-beta-D-glucosyl-[(1-&gt;4)-beta-D-glucosyl]n-1 + [(1-&gt;4)-beta-D-glucosyl]m + acceptor + H2O.</text>
        <dbReference type="EC" id="1.14.99.56"/>
    </reaction>
</comment>
<comment type="cofactor">
    <cofactor evidence="3">
        <name>Cu(2+)</name>
        <dbReference type="ChEBI" id="CHEBI:29036"/>
    </cofactor>
    <text evidence="3">Binds 1 copper ion per subunit.</text>
</comment>
<comment type="subcellular location">
    <subcellularLocation>
        <location evidence="11">Secreted</location>
    </subcellularLocation>
</comment>
<comment type="domain">
    <text evidence="8">Has a modular structure: an endo-beta-1,4-glucanase catalytic module at the N-terminus, a X282 extension, a linker rich in serines and threonines, and a C-terminal carbohydrate-binding module (CBM) (PubMed:37463979). The X282 extension is a highly conserved stretch of approximately 30 amino acids mostly made up of threonine/serine which could potentially serve as O-glycosylation or phosphorylation sites, while five conserved prolines could confer rigidity (PubMed:37463979).</text>
</comment>
<comment type="similarity">
    <text evidence="10">Belongs to the polysaccharide monooxygenase AA9 family.</text>
</comment>
<dbReference type="EC" id="1.14.99.56" evidence="8"/>
<dbReference type="EMBL" id="AACS02000009">
    <property type="protein sequence ID" value="EAU89260.1"/>
    <property type="molecule type" value="Genomic_DNA"/>
</dbReference>
<dbReference type="RefSeq" id="XP_001832511.1">
    <property type="nucleotide sequence ID" value="XM_001832459.1"/>
</dbReference>
<dbReference type="SMR" id="A8NCG7"/>
<dbReference type="STRING" id="240176.A8NCG7"/>
<dbReference type="GeneID" id="6008998"/>
<dbReference type="KEGG" id="cci:CC1G_03525"/>
<dbReference type="VEuPathDB" id="FungiDB:CC1G_03525"/>
<dbReference type="eggNOG" id="ENOG502QRTW">
    <property type="taxonomic scope" value="Eukaryota"/>
</dbReference>
<dbReference type="InParanoid" id="A8NCG7"/>
<dbReference type="OMA" id="YGSQCAR"/>
<dbReference type="OrthoDB" id="3238762at2759"/>
<dbReference type="Proteomes" id="UP000001861">
    <property type="component" value="Unassembled WGS sequence"/>
</dbReference>
<dbReference type="GO" id="GO:0005576">
    <property type="term" value="C:extracellular region"/>
    <property type="evidence" value="ECO:0007669"/>
    <property type="project" value="UniProtKB-SubCell"/>
</dbReference>
<dbReference type="GO" id="GO:0030248">
    <property type="term" value="F:cellulose binding"/>
    <property type="evidence" value="ECO:0007669"/>
    <property type="project" value="InterPro"/>
</dbReference>
<dbReference type="GO" id="GO:0046872">
    <property type="term" value="F:metal ion binding"/>
    <property type="evidence" value="ECO:0007669"/>
    <property type="project" value="UniProtKB-KW"/>
</dbReference>
<dbReference type="GO" id="GO:0004497">
    <property type="term" value="F:monooxygenase activity"/>
    <property type="evidence" value="ECO:0007669"/>
    <property type="project" value="UniProtKB-KW"/>
</dbReference>
<dbReference type="GO" id="GO:0030245">
    <property type="term" value="P:cellulose catabolic process"/>
    <property type="evidence" value="ECO:0007669"/>
    <property type="project" value="UniProtKB-KW"/>
</dbReference>
<dbReference type="CDD" id="cd21175">
    <property type="entry name" value="LPMO_AA9"/>
    <property type="match status" value="1"/>
</dbReference>
<dbReference type="Gene3D" id="2.70.50.70">
    <property type="match status" value="1"/>
</dbReference>
<dbReference type="InterPro" id="IPR049892">
    <property type="entry name" value="AA9"/>
</dbReference>
<dbReference type="InterPro" id="IPR005103">
    <property type="entry name" value="AA9_LPMO"/>
</dbReference>
<dbReference type="InterPro" id="IPR035971">
    <property type="entry name" value="CBD_sf"/>
</dbReference>
<dbReference type="InterPro" id="IPR000254">
    <property type="entry name" value="Cellulose-bd_dom_fun"/>
</dbReference>
<dbReference type="PANTHER" id="PTHR33353:SF9">
    <property type="entry name" value="ENDOGLUCANASE II"/>
    <property type="match status" value="1"/>
</dbReference>
<dbReference type="PANTHER" id="PTHR33353">
    <property type="entry name" value="PUTATIVE (AFU_ORTHOLOGUE AFUA_1G12560)-RELATED"/>
    <property type="match status" value="1"/>
</dbReference>
<dbReference type="Pfam" id="PF03443">
    <property type="entry name" value="AA9"/>
    <property type="match status" value="1"/>
</dbReference>
<dbReference type="Pfam" id="PF00734">
    <property type="entry name" value="CBM_1"/>
    <property type="match status" value="1"/>
</dbReference>
<dbReference type="SMART" id="SM00236">
    <property type="entry name" value="fCBD"/>
    <property type="match status" value="1"/>
</dbReference>
<dbReference type="SUPFAM" id="SSF57180">
    <property type="entry name" value="Cellulose-binding domain"/>
    <property type="match status" value="1"/>
</dbReference>
<dbReference type="PROSITE" id="PS00562">
    <property type="entry name" value="CBM1_1"/>
    <property type="match status" value="1"/>
</dbReference>
<dbReference type="PROSITE" id="PS51164">
    <property type="entry name" value="CBM1_2"/>
    <property type="match status" value="1"/>
</dbReference>
<sequence length="342" mass="36119">MKSFASLLFLAATAAAHATWQQIWVNGVDGGTSCLRRAANNNPIDVGAKELACNAHTLSPNVCTIKPGDKVTVEMHAQHGDRSCAQEAIGGNHYGPVMVYMAKVDDARTADANAADWFKVSEMGMASNNPVYWAVQVLNDNCGHWTFTVPDLAPGNYLIRSEVIALHVAGSIGGAQFYPGCFQVNVVGNGSGRPTETVKFPGAYKATDPGVLFDMYRPQSTYIIPGPRPYGTSPATVANTPYPTTATWNTALQPTTVPTVTPPVGGGTNPPPVTTVAPPVVTSQPPVPPTTQQPPVVTPTAPPSGPLQTQYGQCGGQGWNGPTQCQPPYTCTASNQWYHQCL</sequence>
<proteinExistence type="evidence at protein level"/>
<protein>
    <recommendedName>
        <fullName evidence="9">AA9 family lytic polysaccharide monooxygenase AA9-X282</fullName>
        <ecNumber evidence="8">1.14.99.56</ecNumber>
    </recommendedName>
    <alternativeName>
        <fullName evidence="10">Cellulase AA9-X282</fullName>
    </alternativeName>
    <alternativeName>
        <fullName evidence="10">Endo-beta-1,4-glucanase AA9-X282</fullName>
        <shortName evidence="10">Endoglucanase AA9-X282</shortName>
    </alternativeName>
    <alternativeName>
        <fullName evidence="10">Glycosyl hydrolase 61 family protein AA9-X282</fullName>
    </alternativeName>
    <alternativeName>
        <fullName evidence="9">X282 extension-containing AA9 protein</fullName>
        <shortName evidence="9">AA9-X282</shortName>
    </alternativeName>
</protein>
<evidence type="ECO:0000250" key="1">
    <source>
        <dbReference type="UniProtKB" id="A0A482A9N4"/>
    </source>
</evidence>
<evidence type="ECO:0000250" key="2">
    <source>
        <dbReference type="UniProtKB" id="Q1K8B6"/>
    </source>
</evidence>
<evidence type="ECO:0000250" key="3">
    <source>
        <dbReference type="UniProtKB" id="Q4WP32"/>
    </source>
</evidence>
<evidence type="ECO:0000255" key="4"/>
<evidence type="ECO:0000255" key="5">
    <source>
        <dbReference type="PROSITE-ProRule" id="PRU00498"/>
    </source>
</evidence>
<evidence type="ECO:0000255" key="6">
    <source>
        <dbReference type="PROSITE-ProRule" id="PRU00597"/>
    </source>
</evidence>
<evidence type="ECO:0000256" key="7">
    <source>
        <dbReference type="SAM" id="MobiDB-lite"/>
    </source>
</evidence>
<evidence type="ECO:0000269" key="8">
    <source>
    </source>
</evidence>
<evidence type="ECO:0000303" key="9">
    <source>
    </source>
</evidence>
<evidence type="ECO:0000305" key="10"/>
<evidence type="ECO:0000305" key="11">
    <source>
    </source>
</evidence>
<accession>A8NCG7</accession>
<organism>
    <name type="scientific">Coprinopsis cinerea (strain Okayama-7 / 130 / ATCC MYA-4618 / FGSC 9003)</name>
    <name type="common">Inky cap fungus</name>
    <name type="synonym">Hormographiella aspergillata</name>
    <dbReference type="NCBI Taxonomy" id="240176"/>
    <lineage>
        <taxon>Eukaryota</taxon>
        <taxon>Fungi</taxon>
        <taxon>Dikarya</taxon>
        <taxon>Basidiomycota</taxon>
        <taxon>Agaricomycotina</taxon>
        <taxon>Agaricomycetes</taxon>
        <taxon>Agaricomycetidae</taxon>
        <taxon>Agaricales</taxon>
        <taxon>Agaricineae</taxon>
        <taxon>Psathyrellaceae</taxon>
        <taxon>Coprinopsis</taxon>
    </lineage>
</organism>
<name>LP9_COPC7</name>
<reference key="1">
    <citation type="journal article" date="2010" name="Proc. Natl. Acad. Sci. U.S.A.">
        <title>Insights into evolution of multicellular fungi from the assembled chromosomes of the mushroom Coprinopsis cinerea (Coprinus cinereus).</title>
        <authorList>
            <person name="Stajich J.E."/>
            <person name="Wilke S.K."/>
            <person name="Ahren D."/>
            <person name="Au C.H."/>
            <person name="Birren B.W."/>
            <person name="Borodovsky M."/>
            <person name="Burns C."/>
            <person name="Canbaeck B."/>
            <person name="Casselton L.A."/>
            <person name="Cheng C.K."/>
            <person name="Deng J."/>
            <person name="Dietrich F.S."/>
            <person name="Fargo D.C."/>
            <person name="Farman M.L."/>
            <person name="Gathman A.C."/>
            <person name="Goldberg J."/>
            <person name="Guigo R."/>
            <person name="Hoegger P.J."/>
            <person name="Hooker J.B."/>
            <person name="Huggins A."/>
            <person name="James T.Y."/>
            <person name="Kamada T."/>
            <person name="Kilaru S."/>
            <person name="Kodira C."/>
            <person name="Kuees U."/>
            <person name="Kupfer D."/>
            <person name="Kwan H.S."/>
            <person name="Lomsadze A."/>
            <person name="Li W."/>
            <person name="Lilly W.W."/>
            <person name="Ma L.-J."/>
            <person name="Mackey A.J."/>
            <person name="Manning G."/>
            <person name="Martin F."/>
            <person name="Muraguchi H."/>
            <person name="Natvig D.O."/>
            <person name="Palmerini H."/>
            <person name="Ramesh M.A."/>
            <person name="Rehmeyer C.J."/>
            <person name="Roe B.A."/>
            <person name="Shenoy N."/>
            <person name="Stanke M."/>
            <person name="Ter-Hovhannisyan V."/>
            <person name="Tunlid A."/>
            <person name="Velagapudi R."/>
            <person name="Vision T.J."/>
            <person name="Zeng Q."/>
            <person name="Zolan M.E."/>
            <person name="Pukkila P.J."/>
        </authorList>
    </citation>
    <scope>NUCLEOTIDE SEQUENCE [LARGE SCALE GENOMIC DNA]</scope>
    <source>
        <strain>Okayama-7 / 130 / ATCC MYA-4618 / FGSC 9003</strain>
    </source>
</reference>
<reference key="2">
    <citation type="journal article" date="2023" name="Sci. Rep.">
        <title>Insights into peculiar fungal LPMO family members holding a short C-terminal sequence reminiscent of phosphate binding motifs.</title>
        <authorList>
            <person name="Reyre J.L."/>
            <person name="Grisel S."/>
            <person name="Haon M."/>
            <person name="Xiang R."/>
            <person name="Gaillard J.C."/>
            <person name="Armengaud J."/>
            <person name="Guallar V."/>
            <person name="Margeot A."/>
            <person name="Arragain S."/>
            <person name="Berrin J.G."/>
            <person name="Bissaro B."/>
        </authorList>
    </citation>
    <scope>FUNCTION</scope>
    <scope>CATALYTIC ACTIVITY</scope>
    <scope>DOMAIN</scope>
    <scope>PHOSPHORYLATION AT THR-19; THR-57 AND SER-59</scope>
</reference>
<feature type="signal peptide" evidence="4">
    <location>
        <begin position="1"/>
        <end position="18"/>
    </location>
</feature>
<feature type="chain" id="PRO_5002727213" description="AA9 family lytic polysaccharide monooxygenase AA9-X282">
    <location>
        <begin position="19"/>
        <end position="342"/>
    </location>
</feature>
<feature type="domain" description="CBM1" evidence="6">
    <location>
        <begin position="306"/>
        <end position="342"/>
    </location>
</feature>
<feature type="region of interest" description="X282 extension" evidence="8">
    <location>
        <begin position="233"/>
        <end position="263"/>
    </location>
</feature>
<feature type="region of interest" description="Disordered" evidence="7">
    <location>
        <begin position="281"/>
        <end position="302"/>
    </location>
</feature>
<feature type="compositionally biased region" description="Pro residues" evidence="7">
    <location>
        <begin position="285"/>
        <end position="302"/>
    </location>
</feature>
<feature type="binding site" evidence="1">
    <location>
        <position position="17"/>
    </location>
    <ligand>
        <name>Cu(2+)</name>
        <dbReference type="ChEBI" id="CHEBI:29036"/>
        <note>catalytic</note>
    </ligand>
</feature>
<feature type="binding site" evidence="1">
    <location>
        <position position="93"/>
    </location>
    <ligand>
        <name>Cu(2+)</name>
        <dbReference type="ChEBI" id="CHEBI:29036"/>
        <note>catalytic</note>
    </ligand>
</feature>
<feature type="binding site" evidence="2">
    <location>
        <position position="167"/>
    </location>
    <ligand>
        <name>O2</name>
        <dbReference type="ChEBI" id="CHEBI:15379"/>
    </ligand>
</feature>
<feature type="binding site" evidence="2">
    <location>
        <position position="176"/>
    </location>
    <ligand>
        <name>O2</name>
        <dbReference type="ChEBI" id="CHEBI:15379"/>
    </ligand>
</feature>
<feature type="binding site" evidence="1">
    <location>
        <position position="178"/>
    </location>
    <ligand>
        <name>Cu(2+)</name>
        <dbReference type="ChEBI" id="CHEBI:29036"/>
        <note>catalytic</note>
    </ligand>
</feature>
<feature type="modified residue" description="Phosphothreonine" evidence="8">
    <location>
        <position position="19"/>
    </location>
</feature>
<feature type="modified residue" description="Phosphothreonine" evidence="8">
    <location>
        <position position="57"/>
    </location>
</feature>
<feature type="modified residue" description="Phosphoserine" evidence="8">
    <location>
        <position position="59"/>
    </location>
</feature>
<feature type="glycosylation site" description="N-linked (GlcNAc...) asparagine" evidence="5">
    <location>
        <position position="189"/>
    </location>
</feature>
<feature type="disulfide bond" evidence="1">
    <location>
        <begin position="63"/>
        <end position="181"/>
    </location>
</feature>